<reference key="1">
    <citation type="journal article" date="2024" name="J. Agric. Food Chem.">
        <title>Discovery of a hybrid molecule with phytotoxic activity by genome mining, heterologous expression, and OSMAC strategy.</title>
        <authorList>
            <person name="Lu Y."/>
            <person name="Li Y."/>
            <person name="Dou M."/>
            <person name="Liu D."/>
            <person name="Lin W."/>
            <person name="Fan A."/>
        </authorList>
    </citation>
    <scope>NUCLEOTIDE SEQUENCE [GENOMIC DNA]</scope>
    <scope>FUNCTION</scope>
    <scope>PATHWAY</scope>
</reference>
<name>RESF_ASPSL</name>
<evidence type="ECO:0000250" key="1">
    <source>
        <dbReference type="UniProtKB" id="P9WEG7"/>
    </source>
</evidence>
<evidence type="ECO:0000255" key="2"/>
<evidence type="ECO:0000255" key="3">
    <source>
        <dbReference type="PROSITE-ProRule" id="PRU00498"/>
    </source>
</evidence>
<evidence type="ECO:0000269" key="4">
    <source>
    </source>
</evidence>
<evidence type="ECO:0000303" key="5">
    <source>
    </source>
</evidence>
<evidence type="ECO:0000305" key="6"/>
<evidence type="ECO:0000305" key="7">
    <source>
    </source>
</evidence>
<accession>P0DXW0</accession>
<dbReference type="EC" id="5.4.99.-" evidence="7"/>
<dbReference type="GO" id="GO:0016020">
    <property type="term" value="C:membrane"/>
    <property type="evidence" value="ECO:0007669"/>
    <property type="project" value="UniProtKB-SubCell"/>
</dbReference>
<dbReference type="GO" id="GO:0016853">
    <property type="term" value="F:isomerase activity"/>
    <property type="evidence" value="ECO:0007669"/>
    <property type="project" value="UniProtKB-KW"/>
</dbReference>
<keyword id="KW-0325">Glycoprotein</keyword>
<keyword id="KW-0413">Isomerase</keyword>
<keyword id="KW-0472">Membrane</keyword>
<keyword id="KW-0812">Transmembrane</keyword>
<keyword id="KW-1133">Transmembrane helix</keyword>
<organism>
    <name type="scientific">Aspergillus sclerotiorum</name>
    <dbReference type="NCBI Taxonomy" id="138282"/>
    <lineage>
        <taxon>Eukaryota</taxon>
        <taxon>Fungi</taxon>
        <taxon>Dikarya</taxon>
        <taxon>Ascomycota</taxon>
        <taxon>Pezizomycotina</taxon>
        <taxon>Eurotiomycetes</taxon>
        <taxon>Eurotiomycetidae</taxon>
        <taxon>Eurotiales</taxon>
        <taxon>Aspergillaceae</taxon>
        <taxon>Aspergillus</taxon>
        <taxon>Aspergillus subgen. Circumdati</taxon>
    </lineage>
</organism>
<sequence>MPRPVSVVFVSLIIAAAVGVWGVFAWNGGFEELDAIVNRHPSTGIPGLNHFPSLDQGLMSMAAFNLPVVGREPLFAEGRHFMAQLLANVFAIPIVLLTEDFRAAPGSVARYSTSWGVFSQLATSAVMCPLYGVCFSRRSNPRRVAVLPGRSTWIVLISVLIGYGAPAMLIFDPFSWGLKPQIWGVLAFTVYPLYVCLTASLLLKTVSSKRGRASRSVQKDSDSNSSLHYVVAGIVGVAGHLSYIGFHLGEHTGTAATRPDRVAQLVLRFLQIDYVITFAAMLTLAWHELTHSGRISLKPWRVAGYLLLGWLFIGPGATLAAAWALRERWIRQDTQEEKKRKL</sequence>
<protein>
    <recommendedName>
        <fullName evidence="5">Terpene cyclase resF</fullName>
        <ecNumber evidence="7">5.4.99.-</ecNumber>
    </recommendedName>
    <alternativeName>
        <fullName evidence="5">Restricticin biosynthesis cluster protein F</fullName>
    </alternativeName>
</protein>
<comment type="function">
    <text evidence="1 4">Cyclase; part of the gene cluster that mediates the biosynthesis of the tetrahydropyranyl antifungal agent restricticin that acts as an inhibitor of CYP51 and blocks the ergosterol biosynthesis (PubMed:39105744). The highly reducing polyketide synthase resH, the short chain dehydrogenase resG, the cyclase resF, the FAD-dependent monooxygenase resA and the enoylreductase resD are required to generate the first stable intermediate desmethylrestrictinol. ResH with resD biosynthesize the first polyketide chain intermediate that is reduced by resG, followed by epoxidation by resA before 6-endo cyclization via epoxide opening by resF leads to desmethylrestrictinol. The methyltransferase resE then catalyzes the C4 O-methylation of desmethylrestrictinol to produce restrictinol, and the nonribosomal peptide synthetase resC catalyzes the C3 esterification of restrictinol with glycine that leads to restricticin (By similarity).</text>
</comment>
<comment type="pathway">
    <text evidence="4">Antifungal biosynthesis.</text>
</comment>
<comment type="subcellular location">
    <subcellularLocation>
        <location evidence="2">Membrane</location>
        <topology evidence="2">Multi-pass membrane protein</topology>
    </subcellularLocation>
</comment>
<comment type="similarity">
    <text evidence="6">Belongs to the membrane-bound ascI terpene cyclase family.</text>
</comment>
<feature type="chain" id="PRO_0000461549" description="Terpene cyclase resF">
    <location>
        <begin position="1"/>
        <end position="342"/>
    </location>
</feature>
<feature type="transmembrane region" description="Helical" evidence="2">
    <location>
        <begin position="5"/>
        <end position="25"/>
    </location>
</feature>
<feature type="transmembrane region" description="Helical" evidence="2">
    <location>
        <begin position="81"/>
        <end position="101"/>
    </location>
</feature>
<feature type="transmembrane region" description="Helical" evidence="2">
    <location>
        <begin position="115"/>
        <end position="135"/>
    </location>
</feature>
<feature type="transmembrane region" description="Helical" evidence="2">
    <location>
        <begin position="151"/>
        <end position="171"/>
    </location>
</feature>
<feature type="transmembrane region" description="Helical" evidence="2">
    <location>
        <begin position="182"/>
        <end position="202"/>
    </location>
</feature>
<feature type="transmembrane region" description="Helical" evidence="2">
    <location>
        <begin position="229"/>
        <end position="249"/>
    </location>
</feature>
<feature type="transmembrane region" description="Helical" evidence="2">
    <location>
        <begin position="269"/>
        <end position="289"/>
    </location>
</feature>
<feature type="transmembrane region" description="Helical" evidence="2">
    <location>
        <begin position="305"/>
        <end position="325"/>
    </location>
</feature>
<feature type="glycosylation site" description="N-linked (GlcNAc...) asparagine" evidence="3">
    <location>
        <position position="224"/>
    </location>
</feature>
<proteinExistence type="inferred from homology"/>
<gene>
    <name evidence="5" type="primary">resF</name>
</gene>